<keyword id="KW-0472">Membrane</keyword>
<keyword id="KW-1185">Reference proteome</keyword>
<keyword id="KW-0812">Transmembrane</keyword>
<keyword id="KW-1133">Transmembrane helix</keyword>
<protein>
    <recommendedName>
        <fullName>Transmembrane protein 45B</fullName>
    </recommendedName>
</protein>
<proteinExistence type="evidence at transcript level"/>
<organism>
    <name type="scientific">Danio rerio</name>
    <name type="common">Zebrafish</name>
    <name type="synonym">Brachydanio rerio</name>
    <dbReference type="NCBI Taxonomy" id="7955"/>
    <lineage>
        <taxon>Eukaryota</taxon>
        <taxon>Metazoa</taxon>
        <taxon>Chordata</taxon>
        <taxon>Craniata</taxon>
        <taxon>Vertebrata</taxon>
        <taxon>Euteleostomi</taxon>
        <taxon>Actinopterygii</taxon>
        <taxon>Neopterygii</taxon>
        <taxon>Teleostei</taxon>
        <taxon>Ostariophysi</taxon>
        <taxon>Cypriniformes</taxon>
        <taxon>Danionidae</taxon>
        <taxon>Danioninae</taxon>
        <taxon>Danio</taxon>
    </lineage>
</organism>
<accession>Q6P0S3</accession>
<name>TM45B_DANRE</name>
<feature type="chain" id="PRO_0000271202" description="Transmembrane protein 45B">
    <location>
        <begin position="1"/>
        <end position="283"/>
    </location>
</feature>
<feature type="transmembrane region" description="Helical" evidence="1">
    <location>
        <begin position="7"/>
        <end position="27"/>
    </location>
</feature>
<feature type="transmembrane region" description="Helical" evidence="1">
    <location>
        <begin position="55"/>
        <end position="75"/>
    </location>
</feature>
<feature type="transmembrane region" description="Helical" evidence="1">
    <location>
        <begin position="99"/>
        <end position="119"/>
    </location>
</feature>
<feature type="transmembrane region" description="Helical" evidence="1">
    <location>
        <begin position="121"/>
        <end position="141"/>
    </location>
</feature>
<feature type="transmembrane region" description="Helical" evidence="1">
    <location>
        <begin position="153"/>
        <end position="173"/>
    </location>
</feature>
<feature type="transmembrane region" description="Helical" evidence="1">
    <location>
        <begin position="187"/>
        <end position="207"/>
    </location>
</feature>
<feature type="transmembrane region" description="Helical" evidence="1">
    <location>
        <begin position="218"/>
        <end position="238"/>
    </location>
</feature>
<feature type="region of interest" description="Disordered" evidence="2">
    <location>
        <begin position="261"/>
        <end position="283"/>
    </location>
</feature>
<feature type="compositionally biased region" description="Polar residues" evidence="2">
    <location>
        <begin position="264"/>
        <end position="275"/>
    </location>
</feature>
<reference key="1">
    <citation type="submission" date="2004-01" db="EMBL/GenBank/DDBJ databases">
        <authorList>
            <consortium name="NIH - Zebrafish Gene Collection (ZGC) project"/>
        </authorList>
    </citation>
    <scope>NUCLEOTIDE SEQUENCE [LARGE SCALE MRNA]</scope>
</reference>
<comment type="subcellular location">
    <subcellularLocation>
        <location evidence="3">Membrane</location>
        <topology evidence="3">Multi-pass membrane protein</topology>
    </subcellularLocation>
</comment>
<comment type="similarity">
    <text evidence="3">Belongs to the TMEM45 family.</text>
</comment>
<dbReference type="EMBL" id="BC065467">
    <property type="protein sequence ID" value="AAH65467.1"/>
    <property type="molecule type" value="mRNA"/>
</dbReference>
<dbReference type="RefSeq" id="NP_991240.1">
    <property type="nucleotide sequence ID" value="NM_205677.1"/>
</dbReference>
<dbReference type="SMR" id="Q6P0S3"/>
<dbReference type="FunCoup" id="Q6P0S3">
    <property type="interactions" value="133"/>
</dbReference>
<dbReference type="PaxDb" id="7955-ENSDARP00000100942"/>
<dbReference type="GeneID" id="402977"/>
<dbReference type="KEGG" id="dre:402977"/>
<dbReference type="AGR" id="ZFIN:ZDB-GENE-040426-1904"/>
<dbReference type="CTD" id="120224"/>
<dbReference type="ZFIN" id="ZDB-GENE-040426-1904">
    <property type="gene designation" value="tmem45b"/>
</dbReference>
<dbReference type="eggNOG" id="ENOG502QU0J">
    <property type="taxonomic scope" value="Eukaryota"/>
</dbReference>
<dbReference type="InParanoid" id="Q6P0S3"/>
<dbReference type="OrthoDB" id="551896at2759"/>
<dbReference type="PhylomeDB" id="Q6P0S3"/>
<dbReference type="PRO" id="PR:Q6P0S3"/>
<dbReference type="Proteomes" id="UP000000437">
    <property type="component" value="Chromosome 21"/>
</dbReference>
<dbReference type="GO" id="GO:0016020">
    <property type="term" value="C:membrane"/>
    <property type="evidence" value="ECO:0007669"/>
    <property type="project" value="UniProtKB-SubCell"/>
</dbReference>
<dbReference type="InterPro" id="IPR006904">
    <property type="entry name" value="DUF716"/>
</dbReference>
<dbReference type="InterPro" id="IPR042127">
    <property type="entry name" value="TMEM45"/>
</dbReference>
<dbReference type="PANTHER" id="PTHR16007">
    <property type="entry name" value="EPIDIDYMAL MEMBRANE PROTEIN E9-RELATED"/>
    <property type="match status" value="1"/>
</dbReference>
<dbReference type="PANTHER" id="PTHR16007:SF59">
    <property type="entry name" value="TRANSMEMBRANE PROTEIN 45B"/>
    <property type="match status" value="1"/>
</dbReference>
<dbReference type="Pfam" id="PF04819">
    <property type="entry name" value="DUF716"/>
    <property type="match status" value="1"/>
</dbReference>
<gene>
    <name type="primary">tmem45b</name>
    <name type="ORF">zgc:77892</name>
</gene>
<sequence>MANFKGHALPGTFFLLFGLWWSIKCPFRQILRRKERQVGDRERQKLTALFNRIDLIEGSLKIFFAFVGIMAEQFVPDGPHAHLYQDGWVKLMNWQHSTMYLFYGISGIADVLSVSSHHVPVGLDRLFLSLALFVEGFLFYFHIHNREPLDQHIHSLLLFAVFGGSASTMMEVFKRENAVLELLRCTLAILQGTWFYQIGFVLYPLSGPEWDLTRHDNIMFITMCFCWHLAVALLIVGICYCGVFWTSKWCERRQRGDMEMGLRKSTSTDSSSQKALLQESDEE</sequence>
<evidence type="ECO:0000255" key="1"/>
<evidence type="ECO:0000256" key="2">
    <source>
        <dbReference type="SAM" id="MobiDB-lite"/>
    </source>
</evidence>
<evidence type="ECO:0000305" key="3"/>